<gene>
    <name evidence="1" type="primary">gcvH</name>
    <name type="ordered locus">ECED1_3362</name>
</gene>
<protein>
    <recommendedName>
        <fullName evidence="1">Glycine cleavage system H protein</fullName>
    </recommendedName>
</protein>
<evidence type="ECO:0000255" key="1">
    <source>
        <dbReference type="HAMAP-Rule" id="MF_00272"/>
    </source>
</evidence>
<evidence type="ECO:0000255" key="2">
    <source>
        <dbReference type="PROSITE-ProRule" id="PRU01066"/>
    </source>
</evidence>
<organism>
    <name type="scientific">Escherichia coli O81 (strain ED1a)</name>
    <dbReference type="NCBI Taxonomy" id="585397"/>
    <lineage>
        <taxon>Bacteria</taxon>
        <taxon>Pseudomonadati</taxon>
        <taxon>Pseudomonadota</taxon>
        <taxon>Gammaproteobacteria</taxon>
        <taxon>Enterobacterales</taxon>
        <taxon>Enterobacteriaceae</taxon>
        <taxon>Escherichia</taxon>
    </lineage>
</organism>
<dbReference type="EMBL" id="CU928162">
    <property type="protein sequence ID" value="CAR09373.1"/>
    <property type="molecule type" value="Genomic_DNA"/>
</dbReference>
<dbReference type="RefSeq" id="WP_001305302.1">
    <property type="nucleotide sequence ID" value="NC_011745.1"/>
</dbReference>
<dbReference type="SMR" id="B7MZ56"/>
<dbReference type="KEGG" id="ecq:ECED1_3362"/>
<dbReference type="HOGENOM" id="CLU_097408_2_1_6"/>
<dbReference type="Proteomes" id="UP000000748">
    <property type="component" value="Chromosome"/>
</dbReference>
<dbReference type="GO" id="GO:0005829">
    <property type="term" value="C:cytosol"/>
    <property type="evidence" value="ECO:0007669"/>
    <property type="project" value="TreeGrafter"/>
</dbReference>
<dbReference type="GO" id="GO:0005960">
    <property type="term" value="C:glycine cleavage complex"/>
    <property type="evidence" value="ECO:0007669"/>
    <property type="project" value="InterPro"/>
</dbReference>
<dbReference type="GO" id="GO:0019464">
    <property type="term" value="P:glycine decarboxylation via glycine cleavage system"/>
    <property type="evidence" value="ECO:0007669"/>
    <property type="project" value="UniProtKB-UniRule"/>
</dbReference>
<dbReference type="CDD" id="cd06848">
    <property type="entry name" value="GCS_H"/>
    <property type="match status" value="1"/>
</dbReference>
<dbReference type="FunFam" id="2.40.50.100:FF:000011">
    <property type="entry name" value="Glycine cleavage system H protein"/>
    <property type="match status" value="1"/>
</dbReference>
<dbReference type="Gene3D" id="2.40.50.100">
    <property type="match status" value="1"/>
</dbReference>
<dbReference type="HAMAP" id="MF_00272">
    <property type="entry name" value="GcvH"/>
    <property type="match status" value="1"/>
</dbReference>
<dbReference type="InterPro" id="IPR003016">
    <property type="entry name" value="2-oxoA_DH_lipoyl-BS"/>
</dbReference>
<dbReference type="InterPro" id="IPR000089">
    <property type="entry name" value="Biotin_lipoyl"/>
</dbReference>
<dbReference type="InterPro" id="IPR002930">
    <property type="entry name" value="GCV_H"/>
</dbReference>
<dbReference type="InterPro" id="IPR033753">
    <property type="entry name" value="GCV_H/Fam206"/>
</dbReference>
<dbReference type="InterPro" id="IPR017453">
    <property type="entry name" value="GCV_H_sub"/>
</dbReference>
<dbReference type="InterPro" id="IPR011053">
    <property type="entry name" value="Single_hybrid_motif"/>
</dbReference>
<dbReference type="NCBIfam" id="TIGR00527">
    <property type="entry name" value="gcvH"/>
    <property type="match status" value="1"/>
</dbReference>
<dbReference type="NCBIfam" id="NF002270">
    <property type="entry name" value="PRK01202.1"/>
    <property type="match status" value="1"/>
</dbReference>
<dbReference type="PANTHER" id="PTHR11715">
    <property type="entry name" value="GLYCINE CLEAVAGE SYSTEM H PROTEIN"/>
    <property type="match status" value="1"/>
</dbReference>
<dbReference type="PANTHER" id="PTHR11715:SF3">
    <property type="entry name" value="GLYCINE CLEAVAGE SYSTEM H PROTEIN-RELATED"/>
    <property type="match status" value="1"/>
</dbReference>
<dbReference type="Pfam" id="PF01597">
    <property type="entry name" value="GCV_H"/>
    <property type="match status" value="1"/>
</dbReference>
<dbReference type="SUPFAM" id="SSF51230">
    <property type="entry name" value="Single hybrid motif"/>
    <property type="match status" value="1"/>
</dbReference>
<dbReference type="PROSITE" id="PS50968">
    <property type="entry name" value="BIOTINYL_LIPOYL"/>
    <property type="match status" value="1"/>
</dbReference>
<dbReference type="PROSITE" id="PS00189">
    <property type="entry name" value="LIPOYL"/>
    <property type="match status" value="1"/>
</dbReference>
<reference key="1">
    <citation type="journal article" date="2009" name="PLoS Genet.">
        <title>Organised genome dynamics in the Escherichia coli species results in highly diverse adaptive paths.</title>
        <authorList>
            <person name="Touchon M."/>
            <person name="Hoede C."/>
            <person name="Tenaillon O."/>
            <person name="Barbe V."/>
            <person name="Baeriswyl S."/>
            <person name="Bidet P."/>
            <person name="Bingen E."/>
            <person name="Bonacorsi S."/>
            <person name="Bouchier C."/>
            <person name="Bouvet O."/>
            <person name="Calteau A."/>
            <person name="Chiapello H."/>
            <person name="Clermont O."/>
            <person name="Cruveiller S."/>
            <person name="Danchin A."/>
            <person name="Diard M."/>
            <person name="Dossat C."/>
            <person name="Karoui M.E."/>
            <person name="Frapy E."/>
            <person name="Garry L."/>
            <person name="Ghigo J.M."/>
            <person name="Gilles A.M."/>
            <person name="Johnson J."/>
            <person name="Le Bouguenec C."/>
            <person name="Lescat M."/>
            <person name="Mangenot S."/>
            <person name="Martinez-Jehanne V."/>
            <person name="Matic I."/>
            <person name="Nassif X."/>
            <person name="Oztas S."/>
            <person name="Petit M.A."/>
            <person name="Pichon C."/>
            <person name="Rouy Z."/>
            <person name="Ruf C.S."/>
            <person name="Schneider D."/>
            <person name="Tourret J."/>
            <person name="Vacherie B."/>
            <person name="Vallenet D."/>
            <person name="Medigue C."/>
            <person name="Rocha E.P.C."/>
            <person name="Denamur E."/>
        </authorList>
    </citation>
    <scope>NUCLEOTIDE SEQUENCE [LARGE SCALE GENOMIC DNA]</scope>
    <source>
        <strain>ED1a</strain>
    </source>
</reference>
<keyword id="KW-0450">Lipoyl</keyword>
<feature type="chain" id="PRO_1000190202" description="Glycine cleavage system H protein">
    <location>
        <begin position="1"/>
        <end position="129"/>
    </location>
</feature>
<feature type="domain" description="Lipoyl-binding" evidence="2">
    <location>
        <begin position="24"/>
        <end position="106"/>
    </location>
</feature>
<feature type="modified residue" description="N6-lipoyllysine" evidence="1">
    <location>
        <position position="65"/>
    </location>
</feature>
<accession>B7MZ56</accession>
<sequence length="129" mass="13825">MSNIPAELKYSKEHEWLRKEADGTYTVGITEHAQELLGDMVFVDLPEVGATVSAGDDCAVAESVKAASDIYAPVSGEIVAVNDALSDSPELVNSEPYAGGWIFKIKASDESELESLLDATAYEALLEDE</sequence>
<name>GCSH_ECO81</name>
<comment type="function">
    <text evidence="1">The glycine cleavage system catalyzes the degradation of glycine. The H protein shuttles the methylamine group of glycine from the P protein to the T protein.</text>
</comment>
<comment type="cofactor">
    <cofactor evidence="1">
        <name>(R)-lipoate</name>
        <dbReference type="ChEBI" id="CHEBI:83088"/>
    </cofactor>
    <text evidence="1">Binds 1 lipoyl cofactor covalently.</text>
</comment>
<comment type="subunit">
    <text evidence="1">The glycine cleavage system is composed of four proteins: P, T, L and H.</text>
</comment>
<comment type="similarity">
    <text evidence="1">Belongs to the GcvH family.</text>
</comment>
<proteinExistence type="inferred from homology"/>